<protein>
    <recommendedName>
        <fullName evidence="4">Protein Frey</fullName>
    </recommendedName>
    <alternativeName>
        <fullName>Frey regulator of sperm-oocyte fusion 1</fullName>
        <shortName>FREY1</shortName>
    </alternativeName>
</protein>
<accession>D2HJ50</accession>
<evidence type="ECO:0000250" key="1">
    <source>
        <dbReference type="UniProtKB" id="Q8CF31"/>
    </source>
</evidence>
<evidence type="ECO:0000255" key="2"/>
<evidence type="ECO:0000256" key="3">
    <source>
        <dbReference type="SAM" id="MobiDB-lite"/>
    </source>
</evidence>
<evidence type="ECO:0000305" key="4"/>
<proteinExistence type="inferred from homology"/>
<name>FREY_AILME</name>
<feature type="chain" id="PRO_0000394233" description="Protein Frey">
    <location>
        <begin position="1"/>
        <end position="99"/>
    </location>
</feature>
<feature type="transmembrane region" description="Helical" evidence="2">
    <location>
        <begin position="7"/>
        <end position="29"/>
    </location>
</feature>
<feature type="region of interest" description="Disordered" evidence="3">
    <location>
        <begin position="65"/>
        <end position="88"/>
    </location>
</feature>
<reference key="1">
    <citation type="journal article" date="2010" name="Nature">
        <title>The sequence and de novo assembly of the giant panda genome.</title>
        <authorList>
            <person name="Li R."/>
            <person name="Fan W."/>
            <person name="Tian G."/>
            <person name="Zhu H."/>
            <person name="He L."/>
            <person name="Cai J."/>
            <person name="Huang Q."/>
            <person name="Cai Q."/>
            <person name="Li B."/>
            <person name="Bai Y."/>
            <person name="Zhang Z."/>
            <person name="Zhang Y."/>
            <person name="Wang W."/>
            <person name="Li J."/>
            <person name="Wei F."/>
            <person name="Li H."/>
            <person name="Jian M."/>
            <person name="Li J."/>
            <person name="Zhang Z."/>
            <person name="Nielsen R."/>
            <person name="Li D."/>
            <person name="Gu W."/>
            <person name="Yang Z."/>
            <person name="Xuan Z."/>
            <person name="Ryder O.A."/>
            <person name="Leung F.C."/>
            <person name="Zhou Y."/>
            <person name="Cao J."/>
            <person name="Sun X."/>
            <person name="Fu Y."/>
            <person name="Fang X."/>
            <person name="Guo X."/>
            <person name="Wang B."/>
            <person name="Hou R."/>
            <person name="Shen F."/>
            <person name="Mu B."/>
            <person name="Ni P."/>
            <person name="Lin R."/>
            <person name="Qian W."/>
            <person name="Wang G."/>
            <person name="Yu C."/>
            <person name="Nie W."/>
            <person name="Wang J."/>
            <person name="Wu Z."/>
            <person name="Liang H."/>
            <person name="Min J."/>
            <person name="Wu Q."/>
            <person name="Cheng S."/>
            <person name="Ruan J."/>
            <person name="Wang M."/>
            <person name="Shi Z."/>
            <person name="Wen M."/>
            <person name="Liu B."/>
            <person name="Ren X."/>
            <person name="Zheng H."/>
            <person name="Dong D."/>
            <person name="Cook K."/>
            <person name="Shan G."/>
            <person name="Zhang H."/>
            <person name="Kosiol C."/>
            <person name="Xie X."/>
            <person name="Lu Z."/>
            <person name="Zheng H."/>
            <person name="Li Y."/>
            <person name="Steiner C.C."/>
            <person name="Lam T.T."/>
            <person name="Lin S."/>
            <person name="Zhang Q."/>
            <person name="Li G."/>
            <person name="Tian J."/>
            <person name="Gong T."/>
            <person name="Liu H."/>
            <person name="Zhang D."/>
            <person name="Fang L."/>
            <person name="Ye C."/>
            <person name="Zhang J."/>
            <person name="Hu W."/>
            <person name="Xu A."/>
            <person name="Ren Y."/>
            <person name="Zhang G."/>
            <person name="Bruford M.W."/>
            <person name="Li Q."/>
            <person name="Ma L."/>
            <person name="Guo Y."/>
            <person name="An N."/>
            <person name="Hu Y."/>
            <person name="Zheng Y."/>
            <person name="Shi Y."/>
            <person name="Li Z."/>
            <person name="Liu Q."/>
            <person name="Chen Y."/>
            <person name="Zhao J."/>
            <person name="Qu N."/>
            <person name="Zhao S."/>
            <person name="Tian F."/>
            <person name="Wang X."/>
            <person name="Wang H."/>
            <person name="Xu L."/>
            <person name="Liu X."/>
            <person name="Vinar T."/>
            <person name="Wang Y."/>
            <person name="Lam T.W."/>
            <person name="Yiu S.M."/>
            <person name="Liu S."/>
            <person name="Zhang H."/>
            <person name="Li D."/>
            <person name="Huang Y."/>
            <person name="Wang X."/>
            <person name="Yang G."/>
            <person name="Jiang Z."/>
            <person name="Wang J."/>
            <person name="Qin N."/>
            <person name="Li L."/>
            <person name="Li J."/>
            <person name="Bolund L."/>
            <person name="Kristiansen K."/>
            <person name="Wong G.K."/>
            <person name="Olson M."/>
            <person name="Zhang X."/>
            <person name="Li S."/>
            <person name="Yang H."/>
            <person name="Wang J."/>
            <person name="Wang J."/>
        </authorList>
    </citation>
    <scope>NUCLEOTIDE SEQUENCE [LARGE SCALE GENOMIC DNA]</scope>
</reference>
<gene>
    <name evidence="4" type="primary">FREY1</name>
    <name type="ORF">PANDA_011306</name>
</gene>
<dbReference type="EMBL" id="GL192905">
    <property type="protein sequence ID" value="EFB24355.1"/>
    <property type="molecule type" value="Genomic_DNA"/>
</dbReference>
<dbReference type="SMR" id="D2HJ50"/>
<dbReference type="Ensembl" id="ENSAMET00000000702.2">
    <property type="protein sequence ID" value="ENSAMEP00000000680.1"/>
    <property type="gene ID" value="ENSAMEG00000000654.2"/>
</dbReference>
<dbReference type="GeneID" id="100472118"/>
<dbReference type="KEGG" id="aml:100472118"/>
<dbReference type="CTD" id="143678"/>
<dbReference type="eggNOG" id="ENOG502SCAR">
    <property type="taxonomic scope" value="Eukaryota"/>
</dbReference>
<dbReference type="GeneTree" id="ENSGT00390000018235"/>
<dbReference type="HOGENOM" id="CLU_2319619_0_0_1"/>
<dbReference type="InParanoid" id="D2HJ50"/>
<dbReference type="OMA" id="IRPKHPW"/>
<dbReference type="OrthoDB" id="9908355at2759"/>
<dbReference type="TreeFam" id="TF339805"/>
<dbReference type="Proteomes" id="UP000008912">
    <property type="component" value="Unassembled WGS sequence"/>
</dbReference>
<dbReference type="GO" id="GO:0005789">
    <property type="term" value="C:endoplasmic reticulum membrane"/>
    <property type="evidence" value="ECO:0000250"/>
    <property type="project" value="UniProtKB"/>
</dbReference>
<dbReference type="GO" id="GO:0030674">
    <property type="term" value="F:protein-macromolecule adaptor activity"/>
    <property type="evidence" value="ECO:0000250"/>
    <property type="project" value="UniProtKB"/>
</dbReference>
<dbReference type="GO" id="GO:0007342">
    <property type="term" value="P:fusion of sperm to egg plasma membrane involved in single fertilization"/>
    <property type="evidence" value="ECO:0000250"/>
    <property type="project" value="UniProtKB"/>
</dbReference>
<dbReference type="GO" id="GO:0010467">
    <property type="term" value="P:gene expression"/>
    <property type="evidence" value="ECO:0007669"/>
    <property type="project" value="Ensembl"/>
</dbReference>
<dbReference type="GO" id="GO:0035437">
    <property type="term" value="P:maintenance of protein localization in endoplasmic reticulum"/>
    <property type="evidence" value="ECO:0000250"/>
    <property type="project" value="UniProtKB"/>
</dbReference>
<dbReference type="GO" id="GO:0006487">
    <property type="term" value="P:protein N-linked glycosylation"/>
    <property type="evidence" value="ECO:0007669"/>
    <property type="project" value="Ensembl"/>
</dbReference>
<dbReference type="GO" id="GO:0050821">
    <property type="term" value="P:protein stabilization"/>
    <property type="evidence" value="ECO:0007669"/>
    <property type="project" value="Ensembl"/>
</dbReference>
<dbReference type="GO" id="GO:0016567">
    <property type="term" value="P:protein ubiquitination"/>
    <property type="evidence" value="ECO:0007669"/>
    <property type="project" value="Ensembl"/>
</dbReference>
<dbReference type="GO" id="GO:0065003">
    <property type="term" value="P:protein-containing complex assembly"/>
    <property type="evidence" value="ECO:0007669"/>
    <property type="project" value="Ensembl"/>
</dbReference>
<dbReference type="GO" id="GO:0035036">
    <property type="term" value="P:sperm-egg recognition"/>
    <property type="evidence" value="ECO:0000250"/>
    <property type="project" value="UniProtKB"/>
</dbReference>
<dbReference type="GO" id="GO:0007286">
    <property type="term" value="P:spermatid development"/>
    <property type="evidence" value="ECO:0007669"/>
    <property type="project" value="Ensembl"/>
</dbReference>
<dbReference type="InterPro" id="IPR031748">
    <property type="entry name" value="Frey"/>
</dbReference>
<dbReference type="PANTHER" id="PTHR37872:SF1">
    <property type="entry name" value="PROTEIN FREY 1"/>
    <property type="match status" value="1"/>
</dbReference>
<dbReference type="PANTHER" id="PTHR37872">
    <property type="entry name" value="SIMILAR TO RIKEN CDNA 1700029I15"/>
    <property type="match status" value="1"/>
</dbReference>
<dbReference type="Pfam" id="PF15878">
    <property type="entry name" value="Frey"/>
    <property type="match status" value="1"/>
</dbReference>
<organism>
    <name type="scientific">Ailuropoda melanoleuca</name>
    <name type="common">Giant panda</name>
    <dbReference type="NCBI Taxonomy" id="9646"/>
    <lineage>
        <taxon>Eukaryota</taxon>
        <taxon>Metazoa</taxon>
        <taxon>Chordata</taxon>
        <taxon>Craniata</taxon>
        <taxon>Vertebrata</taxon>
        <taxon>Euteleostomi</taxon>
        <taxon>Mammalia</taxon>
        <taxon>Eutheria</taxon>
        <taxon>Laurasiatheria</taxon>
        <taxon>Carnivora</taxon>
        <taxon>Caniformia</taxon>
        <taxon>Ursidae</taxon>
        <taxon>Ailuropoda</taxon>
    </lineage>
</organism>
<keyword id="KW-0256">Endoplasmic reticulum</keyword>
<keyword id="KW-0472">Membrane</keyword>
<keyword id="KW-1185">Reference proteome</keyword>
<keyword id="KW-0812">Transmembrane</keyword>
<keyword id="KW-1133">Transmembrane helix</keyword>
<comment type="function">
    <text evidence="1">Key regulator for male fertility expressed transiently in round spermatids where it recruits IZUMO1 at the endoplasmic reticulum (ER) membrane and coordinates the oolemmal binding multimeric complex (IZUMO1 complex) assembly. Upon complete assembly of the IZUMO1 complex, its ER retention is released, facilitating IZUMO1 complex export to the acrosome. Through the interaction with SPPL2C, inhibits its intramembrane protease activity directly accessing the catalytic center of an I-CLiP.</text>
</comment>
<comment type="subunit">
    <text evidence="1">Interacts with SPPL2C (via active sites); the interaction stabilizes FREY1 protein and inhibits SPPL2C proteolytic activity. Interacts with IZUMO1; the interaction retains IZUMO1 at the endoplasmic reticulum membrane and coordinates IZUMO1 complex assembly.</text>
</comment>
<comment type="subcellular location">
    <subcellularLocation>
        <location evidence="1">Endoplasmic reticulum membrane</location>
        <topology evidence="1">Single-pass type II membrane protein</topology>
    </subcellularLocation>
</comment>
<sequence>MVRTMPGALYPRAGLSLFLLYLVLAAVLLRPQPLRPQRSVPEEFSAPLELSQPLSGLVDDYGVRPKHPWPRGPRPLLSRAQQRKRDGPDMAEYYYNAHL</sequence>